<evidence type="ECO:0000250" key="1"/>
<evidence type="ECO:0000250" key="2">
    <source>
        <dbReference type="UniProtKB" id="P31353"/>
    </source>
</evidence>
<evidence type="ECO:0000250" key="3">
    <source>
        <dbReference type="UniProtKB" id="Q92871"/>
    </source>
</evidence>
<evidence type="ECO:0000305" key="4"/>
<organism>
    <name type="scientific">Babesia bovis</name>
    <dbReference type="NCBI Taxonomy" id="5865"/>
    <lineage>
        <taxon>Eukaryota</taxon>
        <taxon>Sar</taxon>
        <taxon>Alveolata</taxon>
        <taxon>Apicomplexa</taxon>
        <taxon>Aconoidasida</taxon>
        <taxon>Piroplasmida</taxon>
        <taxon>Babesiidae</taxon>
        <taxon>Babesia</taxon>
    </lineage>
</organism>
<comment type="function">
    <text evidence="1">Involved in the synthesis of the GDP-mannose and dolichol-phosphate-mannose required for a number of critical mannosyl transfer reactions.</text>
</comment>
<comment type="catalytic activity">
    <reaction>
        <text>alpha-D-mannose 1-phosphate = D-mannose 6-phosphate</text>
        <dbReference type="Rhea" id="RHEA:11140"/>
        <dbReference type="ChEBI" id="CHEBI:58409"/>
        <dbReference type="ChEBI" id="CHEBI:58735"/>
        <dbReference type="EC" id="5.4.2.8"/>
    </reaction>
</comment>
<comment type="pathway">
    <text>Nucleotide-sugar biosynthesis; GDP-alpha-D-mannose biosynthesis; alpha-D-mannose 1-phosphate from D-fructose 6-phosphate: step 2/2.</text>
</comment>
<comment type="subunit">
    <text evidence="1">Homodimer.</text>
</comment>
<comment type="subcellular location">
    <subcellularLocation>
        <location evidence="1">Cytoplasm</location>
    </subcellularLocation>
</comment>
<comment type="similarity">
    <text evidence="4">Belongs to the eukaryotic PMM family.</text>
</comment>
<keyword id="KW-0963">Cytoplasm</keyword>
<keyword id="KW-0413">Isomerase</keyword>
<keyword id="KW-0460">Magnesium</keyword>
<keyword id="KW-0479">Metal-binding</keyword>
<dbReference type="EC" id="5.4.2.8"/>
<dbReference type="EMBL" id="AF027149">
    <property type="protein sequence ID" value="AAC27385.1"/>
    <property type="molecule type" value="Genomic_DNA"/>
</dbReference>
<dbReference type="EMBL" id="AF028591">
    <property type="protein sequence ID" value="AAC27390.1"/>
    <property type="molecule type" value="mRNA"/>
</dbReference>
<dbReference type="SMR" id="O43976"/>
<dbReference type="VEuPathDB" id="PiroplasmaDB:BBOV_IV009850"/>
<dbReference type="eggNOG" id="KOG3189">
    <property type="taxonomic scope" value="Eukaryota"/>
</dbReference>
<dbReference type="UniPathway" id="UPA00126">
    <property type="reaction ID" value="UER00424"/>
</dbReference>
<dbReference type="GO" id="GO:0005829">
    <property type="term" value="C:cytosol"/>
    <property type="evidence" value="ECO:0007669"/>
    <property type="project" value="TreeGrafter"/>
</dbReference>
<dbReference type="GO" id="GO:0046872">
    <property type="term" value="F:metal ion binding"/>
    <property type="evidence" value="ECO:0007669"/>
    <property type="project" value="UniProtKB-KW"/>
</dbReference>
<dbReference type="GO" id="GO:0004615">
    <property type="term" value="F:phosphomannomutase activity"/>
    <property type="evidence" value="ECO:0007669"/>
    <property type="project" value="UniProtKB-EC"/>
</dbReference>
<dbReference type="GO" id="GO:0009298">
    <property type="term" value="P:GDP-mannose biosynthetic process"/>
    <property type="evidence" value="ECO:0007669"/>
    <property type="project" value="UniProtKB-UniPathway"/>
</dbReference>
<dbReference type="GO" id="GO:0006013">
    <property type="term" value="P:mannose metabolic process"/>
    <property type="evidence" value="ECO:0007669"/>
    <property type="project" value="TreeGrafter"/>
</dbReference>
<dbReference type="GO" id="GO:0006487">
    <property type="term" value="P:protein N-linked glycosylation"/>
    <property type="evidence" value="ECO:0007669"/>
    <property type="project" value="TreeGrafter"/>
</dbReference>
<dbReference type="CDD" id="cd02585">
    <property type="entry name" value="HAD_PMM"/>
    <property type="match status" value="1"/>
</dbReference>
<dbReference type="FunFam" id="3.30.1240.20:FF:000001">
    <property type="entry name" value="Phosphomannomutase"/>
    <property type="match status" value="1"/>
</dbReference>
<dbReference type="Gene3D" id="3.30.1240.20">
    <property type="match status" value="1"/>
</dbReference>
<dbReference type="Gene3D" id="3.40.50.1000">
    <property type="entry name" value="HAD superfamily/HAD-like"/>
    <property type="match status" value="1"/>
</dbReference>
<dbReference type="InterPro" id="IPR036412">
    <property type="entry name" value="HAD-like_sf"/>
</dbReference>
<dbReference type="InterPro" id="IPR006379">
    <property type="entry name" value="HAD-SF_hydro_IIB"/>
</dbReference>
<dbReference type="InterPro" id="IPR023214">
    <property type="entry name" value="HAD_sf"/>
</dbReference>
<dbReference type="InterPro" id="IPR005002">
    <property type="entry name" value="PMM"/>
</dbReference>
<dbReference type="InterPro" id="IPR043169">
    <property type="entry name" value="PMM_cap"/>
</dbReference>
<dbReference type="NCBIfam" id="TIGR01484">
    <property type="entry name" value="HAD-SF-IIB"/>
    <property type="match status" value="1"/>
</dbReference>
<dbReference type="PANTHER" id="PTHR10466">
    <property type="entry name" value="PHOSPHOMANNOMUTASE"/>
    <property type="match status" value="1"/>
</dbReference>
<dbReference type="PANTHER" id="PTHR10466:SF0">
    <property type="entry name" value="PHOSPHOMANNOMUTASE"/>
    <property type="match status" value="1"/>
</dbReference>
<dbReference type="Pfam" id="PF03332">
    <property type="entry name" value="PMM"/>
    <property type="match status" value="1"/>
</dbReference>
<dbReference type="SFLD" id="SFLDG01143">
    <property type="entry name" value="C2.B.3:_Phosphomannomutase_Lik"/>
    <property type="match status" value="1"/>
</dbReference>
<dbReference type="SFLD" id="SFLDG01140">
    <property type="entry name" value="C2.B:_Phosphomannomutase_and_P"/>
    <property type="match status" value="1"/>
</dbReference>
<dbReference type="SUPFAM" id="SSF56784">
    <property type="entry name" value="HAD-like"/>
    <property type="match status" value="1"/>
</dbReference>
<feature type="chain" id="PRO_0000199697" description="Phosphomannomutase">
    <location>
        <begin position="1"/>
        <end position="246"/>
    </location>
</feature>
<feature type="active site" description="Nucleophile" evidence="3">
    <location>
        <position position="9"/>
    </location>
</feature>
<feature type="active site" description="Proton donor/acceptor" evidence="3">
    <location>
        <position position="11"/>
    </location>
</feature>
<feature type="binding site" evidence="3">
    <location>
        <position position="9"/>
    </location>
    <ligand>
        <name>Mg(2+)</name>
        <dbReference type="ChEBI" id="CHEBI:18420"/>
    </ligand>
</feature>
<feature type="binding site" evidence="3">
    <location>
        <position position="11"/>
    </location>
    <ligand>
        <name>Mg(2+)</name>
        <dbReference type="ChEBI" id="CHEBI:18420"/>
    </ligand>
</feature>
<feature type="binding site" evidence="3">
    <location>
        <position position="121"/>
    </location>
    <ligand>
        <name>alpha-D-mannose 1-phosphate</name>
        <dbReference type="ChEBI" id="CHEBI:58409"/>
    </ligand>
</feature>
<feature type="binding site" evidence="3">
    <location>
        <position position="132"/>
    </location>
    <ligand>
        <name>alpha-D-mannose 1-phosphate</name>
        <dbReference type="ChEBI" id="CHEBI:58409"/>
    </ligand>
</feature>
<feature type="binding site" evidence="3">
    <location>
        <position position="139"/>
    </location>
    <ligand>
        <name>alpha-D-mannose 1-phosphate</name>
        <dbReference type="ChEBI" id="CHEBI:58409"/>
    </ligand>
</feature>
<feature type="binding site" evidence="3">
    <location>
        <position position="179"/>
    </location>
    <ligand>
        <name>alpha-D-mannose 1-phosphate</name>
        <dbReference type="ChEBI" id="CHEBI:58409"/>
    </ligand>
</feature>
<feature type="binding site" evidence="3">
    <location>
        <position position="181"/>
    </location>
    <ligand>
        <name>alpha-D-mannose 1-phosphate</name>
        <dbReference type="ChEBI" id="CHEBI:58409"/>
    </ligand>
</feature>
<feature type="binding site" evidence="2">
    <location>
        <position position="207"/>
    </location>
    <ligand>
        <name>Mg(2+)</name>
        <dbReference type="ChEBI" id="CHEBI:18420"/>
    </ligand>
</feature>
<sequence length="246" mass="28167">MVRQMLIFDMDGTLTDPVQVINNDVKDILRRCKRKNFEIAVVSGSKYEKIKGQLNDGFIDEFDYVFSENGTQVYVKNVLVKSLDITEAIPETKLRKMVEFCLRYIADLDIPTKRGTFIEHRKSLINICPPGRNCSMVDRRRFVEYDSIHHVRQKLIQVLKSQFDSDDCPLSFVAGGQISIDVYPKAWSKSIALSHIGKCDVIHFFGDNTREGGNDFEIYNHPDVIGHTVTGYKDLVNQLEELLAKS</sequence>
<proteinExistence type="evidence at transcript level"/>
<gene>
    <name type="primary">PMM</name>
</gene>
<protein>
    <recommendedName>
        <fullName>Phosphomannomutase</fullName>
        <ecNumber>5.4.2.8</ecNumber>
    </recommendedName>
</protein>
<name>PMM_BABBO</name>
<reference key="1">
    <citation type="journal article" date="1998" name="Mol. Biochem. Parasitol.">
        <title>Structure, sequence, and transcriptional analysis of the Babesia bovis rap-1 multigene locus.</title>
        <authorList>
            <person name="Suarez C.E."/>
            <person name="Palmer G.H."/>
            <person name="Hotzel I."/>
            <person name="McElwain T.F."/>
        </authorList>
    </citation>
    <scope>NUCLEOTIDE SEQUENCE [GENOMIC DNA / MRNA]</scope>
    <source>
        <strain>Mexico Mo7</strain>
    </source>
</reference>
<accession>O43976</accession>
<accession>O15780</accession>